<accession>C0HK52</accession>
<gene>
    <name evidence="1" type="primary">ATP2</name>
</gene>
<organism evidence="8">
    <name type="scientific">Pichia angusta</name>
    <name type="common">Yeast</name>
    <name type="synonym">Hansenula polymorpha</name>
    <dbReference type="NCBI Taxonomy" id="870730"/>
    <lineage>
        <taxon>Eukaryota</taxon>
        <taxon>Fungi</taxon>
        <taxon>Dikarya</taxon>
        <taxon>Ascomycota</taxon>
        <taxon>Saccharomycotina</taxon>
        <taxon>Pichiomycetes</taxon>
        <taxon>Pichiales</taxon>
        <taxon>Pichiaceae</taxon>
        <taxon>Ogataea</taxon>
    </lineage>
</organism>
<comment type="function">
    <text evidence="3 5 6">Mitochondrial membrane ATP synthase (F(1)F(0) ATP synthase or Complex V) produces ATP from ADP in the presence of a proton gradient across the membrane which is generated by electron transport complexes of the respiratory chain (PubMed:25759169). F-type ATP synthases consist of two structural domains, F(1) - containing the extramembraneous catalytic core, and F(0) - containing the membrane proton channel, linked together by a central stalk and a peripheral stalk (PubMed:27791192). During catalysis, ATP synthesis in the catalytic domain of F(1) is coupled via a rotary mechanism of the central stalk subunits to proton translocation (By similarity). Subunits alpha/ATP1 and beta/ATP2 form the catalytic core in F(1) (By similarity). Rotation of the central stalk against the surrounding alpha/ATP1(3)beta/ATP2(3) subunits leads to hydrolysis of ATP in three separate catalytic sites on the beta/ATP2 subunits (By similarity).</text>
</comment>
<comment type="catalytic activity">
    <reaction evidence="4 5">
        <text>ATP + H2O + 4 H(+)(in) = ADP + phosphate + 5 H(+)(out)</text>
        <dbReference type="Rhea" id="RHEA:57720"/>
        <dbReference type="ChEBI" id="CHEBI:15377"/>
        <dbReference type="ChEBI" id="CHEBI:15378"/>
        <dbReference type="ChEBI" id="CHEBI:30616"/>
        <dbReference type="ChEBI" id="CHEBI:43474"/>
        <dbReference type="ChEBI" id="CHEBI:456216"/>
        <dbReference type="EC" id="7.1.2.2"/>
    </reaction>
</comment>
<comment type="subunit">
    <text evidence="2 3 5 6">F-type ATP synthases have 2 components, the catalytic core F(1) and the membrane-embedded component F(0), linked together by a central stalk and a peripheral stalk (PubMed:27791192). The central stalk, also called rotor shaft, is often seen as part of F(1) (PubMed:27791192). The peripheral stalk is seen as part of F(0). F(0) contains the membrane channel next to the rotor (PubMed:27791192). F-type ATP synthases form dimers but each monomer functions independently in ATP generation (By similarity). The dimer consists of 18 different polypeptides: ATP1 (subunit alpha, part of F(1), 3 molecules per monomer), ATP2 (subunit beta, part of F(1), 3 molecules per monomer), ATP3 (subunit gamma, part of the central stalk), ATP4 (subunit b, part of the peripheral stalk), ATP5/OSCP (subunit 5/OSCP, part of the peripheral stalk), ATP6 (subunit a, part of the peripheral stalk), ATP7 (subunit d, part of the peripheral stalk), ATP8 (subunit 8, part of the peripheral stalk), OLI1 (subunit c, part of the rotor, 10 molecules per monomer), ATP14 (subunit h, part of the peripheral stalk), ATP15 (subunit epsilon, part of the central stalk), ATP16 (subunit delta, part of the central stalk), ATP17 (subunit f, part of the peripheral stalk), ATP18 (subunit i/j, part of the peripheral stalk) (PubMed:25759169, PubMed:27791192). Dimer-specific subunits are ATP19 (subunit k, at interface between monomers), ATP20 (subunit g, at interface between monomers), TIM11 (subunit e, at interface between monomers) (By similarity). Also contains subunit L (PubMed:25759169).</text>
</comment>
<comment type="subcellular location">
    <subcellularLocation>
        <location evidence="11">Mitochondrion inner membrane</location>
        <topology evidence="11">Peripheral membrane protein</topology>
        <orientation evidence="11">Matrix side</orientation>
    </subcellularLocation>
    <text evidence="11">The F-type ATP synthase complex is anchored in the mitochondrial inner membrane via the F(0) domain with the F(1) domain and the peripheral stalk extending into the mitochondrial matrix.</text>
</comment>
<comment type="mass spectrometry" mass="50809.0" method="MALDI" evidence="5"/>
<comment type="similarity">
    <text evidence="10">Belongs to the ATPase alpha/beta chains family.</text>
</comment>
<evidence type="ECO:0000250" key="1">
    <source>
        <dbReference type="UniProtKB" id="P00830"/>
    </source>
</evidence>
<evidence type="ECO:0000250" key="2">
    <source>
        <dbReference type="UniProtKB" id="Q6C326"/>
    </source>
</evidence>
<evidence type="ECO:0000250" key="3">
    <source>
        <dbReference type="UniProtKB" id="Q6CFT7"/>
    </source>
</evidence>
<evidence type="ECO:0000255" key="4">
    <source>
        <dbReference type="PROSITE-ProRule" id="PRU10106"/>
    </source>
</evidence>
<evidence type="ECO:0000269" key="5">
    <source>
    </source>
</evidence>
<evidence type="ECO:0000269" key="6">
    <source>
    </source>
</evidence>
<evidence type="ECO:0000269" key="7">
    <source ref="1"/>
</evidence>
<evidence type="ECO:0000303" key="8">
    <source>
    </source>
</evidence>
<evidence type="ECO:0000303" key="9">
    <source ref="1"/>
</evidence>
<evidence type="ECO:0000305" key="10"/>
<evidence type="ECO:0000305" key="11">
    <source>
    </source>
</evidence>
<evidence type="ECO:0007744" key="12">
    <source>
        <dbReference type="PDB" id="5LQX"/>
    </source>
</evidence>
<evidence type="ECO:0007744" key="13">
    <source>
        <dbReference type="PDB" id="5LQY"/>
    </source>
</evidence>
<evidence type="ECO:0007744" key="14">
    <source>
        <dbReference type="PDB" id="5LQZ"/>
    </source>
</evidence>
<sequence length="476" mass="50803">ATAGPASGKIRAVIGAVVDVQFEQGELPAILNALTIDQGNNQKLVLEVAQHLGENAVRAIAMDGTEGLVRGQTVVDTGAPISVPVGRGTLGRIINVVGEPIDERGPIECKQRNPIHADPPSFVEQSTEAEVLETGIKVVDLLAPYARGGKIGLFGGAGVGKTVFIQELINNIAKAHGGFSVFTGVGERTREGNDLYREMKETGVINLEGESKVALVFGQMNEPPGARARVALTGLTIAEYFRDEEGQDVLLFVDNIFRFTQAGSEVSALLGRIPSAVGYQPTLATDMGLLQERITTTRKGSVTSVQAVYVPADDLTDPAPATTFAHLDATTVLSRGISELGIYPAVDPLDSKSRLLDVSVVGQEHYDVATGVQQTLQAYKSLQDIIAILGMDELSEQDKLTVERARKIQRFLSQPFAVAEVFTGIEGKLVRLKDTIASFKAVLEGKYDHLPENAFYMVGGIEDVVAKAEKIAAEAN</sequence>
<proteinExistence type="evidence at protein level"/>
<reference evidence="10" key="1">
    <citation type="submission" date="2016-08" db="UniProtKB">
        <authorList>
            <person name="Fearnley I.M."/>
        </authorList>
    </citation>
    <scope>PARTIAL PROTEIN SEQUENCE</scope>
    <source>
        <strain evidence="9">A16 / NCYC 2310</strain>
    </source>
</reference>
<reference evidence="10" key="2">
    <citation type="journal article" date="2015" name="Biochem. J.">
        <title>The purification and characterization of ATP synthase complexes from the mitochondria of four fungal species.</title>
        <authorList>
            <person name="Liu S."/>
            <person name="Charlesworth T.J."/>
            <person name="Bason J.V."/>
            <person name="Montgomery M.G."/>
            <person name="Harbour M.E."/>
            <person name="Fearnley I.M."/>
            <person name="Walker J.E."/>
        </authorList>
    </citation>
    <scope>PROTEIN SEQUENCE OF 1-4</scope>
    <scope>IDENTIFICATION IN ATP SYNTHASE COMPLEX</scope>
    <scope>FUNCTION OF ATPASE COMPLEX</scope>
    <scope>SUBUNIT</scope>
    <scope>CATALYTIC ACTIVITY</scope>
    <scope>SUBCELLULAR LOCATION</scope>
    <scope>MASS SPECTROMETRY</scope>
    <scope>IDENTIFICATION BY MASS SPECTROMETRY</scope>
    <source>
        <strain evidence="8">A16 / NCYC 2310</strain>
    </source>
</reference>
<reference evidence="12 13 14" key="3">
    <citation type="journal article" date="2016" name="Proc. Natl. Acad. Sci. U.S.A.">
        <title>Structure of the mitochondrial ATP synthase from Pichia angusta determined by electron cryo-microscopy.</title>
        <authorList>
            <person name="Vinothkumar K.R."/>
            <person name="Montgomery M.G."/>
            <person name="Liu S."/>
            <person name="Walker J.E."/>
        </authorList>
    </citation>
    <scope>STRUCTURE BY ELECTRON MICROSCOPY (7.0 ANGSTROMS) OF MONOMERIC ATP SYNTHASE COMPLEX IN COMPLEX WITH BOVINE ATPIF1</scope>
    <scope>FUNCTION</scope>
    <scope>SUBUNIT</scope>
    <scope>SUBCELLULAR LOCATION</scope>
</reference>
<feature type="chain" id="PRO_0000445311" description="ATP synthase subunit beta, mitochondrial" evidence="7">
    <location>
        <begin position="1"/>
        <end position="476"/>
    </location>
</feature>
<feature type="binding site" evidence="3">
    <location>
        <begin position="156"/>
        <end position="163"/>
    </location>
    <ligand>
        <name>ATP</name>
        <dbReference type="ChEBI" id="CHEBI:30616"/>
    </ligand>
</feature>
<feature type="site" description="Required for activity" evidence="4">
    <location>
        <position position="351"/>
    </location>
</feature>
<dbReference type="EC" id="7.1.2.2" evidence="4 5"/>
<dbReference type="PDB" id="5LQX">
    <property type="method" value="EM"/>
    <property type="resolution" value="7.90 A"/>
    <property type="chains" value="D/E/F=1-476"/>
</dbReference>
<dbReference type="PDB" id="5LQY">
    <property type="method" value="EM"/>
    <property type="resolution" value="7.80 A"/>
    <property type="chains" value="D/E/F=1-476"/>
</dbReference>
<dbReference type="PDB" id="5LQZ">
    <property type="method" value="EM"/>
    <property type="resolution" value="7.00 A"/>
    <property type="chains" value="D/E/F=1-476"/>
</dbReference>
<dbReference type="PDBsum" id="5LQX"/>
<dbReference type="PDBsum" id="5LQY"/>
<dbReference type="PDBsum" id="5LQZ"/>
<dbReference type="EMDB" id="EMD-4100"/>
<dbReference type="EMDB" id="EMD-4101"/>
<dbReference type="EMDB" id="EMD-4102"/>
<dbReference type="SMR" id="C0HK52"/>
<dbReference type="GO" id="GO:0005743">
    <property type="term" value="C:mitochondrial inner membrane"/>
    <property type="evidence" value="ECO:0007669"/>
    <property type="project" value="UniProtKB-SubCell"/>
</dbReference>
<dbReference type="GO" id="GO:0045259">
    <property type="term" value="C:proton-transporting ATP synthase complex"/>
    <property type="evidence" value="ECO:0007669"/>
    <property type="project" value="UniProtKB-KW"/>
</dbReference>
<dbReference type="GO" id="GO:0005524">
    <property type="term" value="F:ATP binding"/>
    <property type="evidence" value="ECO:0007669"/>
    <property type="project" value="UniProtKB-KW"/>
</dbReference>
<dbReference type="GO" id="GO:0016887">
    <property type="term" value="F:ATP hydrolysis activity"/>
    <property type="evidence" value="ECO:0007669"/>
    <property type="project" value="InterPro"/>
</dbReference>
<dbReference type="GO" id="GO:0046933">
    <property type="term" value="F:proton-transporting ATP synthase activity, rotational mechanism"/>
    <property type="evidence" value="ECO:0007669"/>
    <property type="project" value="InterPro"/>
</dbReference>
<dbReference type="GO" id="GO:0042776">
    <property type="term" value="P:proton motive force-driven mitochondrial ATP synthesis"/>
    <property type="evidence" value="ECO:0007669"/>
    <property type="project" value="TreeGrafter"/>
</dbReference>
<dbReference type="CDD" id="cd18110">
    <property type="entry name" value="ATP-synt_F1_beta_C"/>
    <property type="match status" value="1"/>
</dbReference>
<dbReference type="CDD" id="cd18115">
    <property type="entry name" value="ATP-synt_F1_beta_N"/>
    <property type="match status" value="1"/>
</dbReference>
<dbReference type="CDD" id="cd01133">
    <property type="entry name" value="F1-ATPase_beta_CD"/>
    <property type="match status" value="1"/>
</dbReference>
<dbReference type="FunFam" id="1.10.1140.10:FF:000001">
    <property type="entry name" value="ATP synthase subunit beta"/>
    <property type="match status" value="1"/>
</dbReference>
<dbReference type="FunFam" id="2.40.10.170:FF:000005">
    <property type="entry name" value="ATP synthase subunit beta"/>
    <property type="match status" value="1"/>
</dbReference>
<dbReference type="FunFam" id="3.40.50.300:FF:000026">
    <property type="entry name" value="ATP synthase subunit beta"/>
    <property type="match status" value="1"/>
</dbReference>
<dbReference type="Gene3D" id="2.40.10.170">
    <property type="match status" value="1"/>
</dbReference>
<dbReference type="Gene3D" id="1.10.1140.10">
    <property type="entry name" value="Bovine Mitochondrial F1-atpase, Atp Synthase Beta Chain, Chain D, domain 3"/>
    <property type="match status" value="1"/>
</dbReference>
<dbReference type="Gene3D" id="3.40.50.300">
    <property type="entry name" value="P-loop containing nucleotide triphosphate hydrolases"/>
    <property type="match status" value="1"/>
</dbReference>
<dbReference type="HAMAP" id="MF_01347">
    <property type="entry name" value="ATP_synth_beta_bact"/>
    <property type="match status" value="1"/>
</dbReference>
<dbReference type="InterPro" id="IPR003593">
    <property type="entry name" value="AAA+_ATPase"/>
</dbReference>
<dbReference type="InterPro" id="IPR055190">
    <property type="entry name" value="ATP-synt_VA_C"/>
</dbReference>
<dbReference type="InterPro" id="IPR005722">
    <property type="entry name" value="ATP_synth_F1_bsu"/>
</dbReference>
<dbReference type="InterPro" id="IPR020003">
    <property type="entry name" value="ATPase_a/bsu_AS"/>
</dbReference>
<dbReference type="InterPro" id="IPR050053">
    <property type="entry name" value="ATPase_alpha/beta_chains"/>
</dbReference>
<dbReference type="InterPro" id="IPR004100">
    <property type="entry name" value="ATPase_F1/V1/A1_a/bsu_N"/>
</dbReference>
<dbReference type="InterPro" id="IPR036121">
    <property type="entry name" value="ATPase_F1/V1/A1_a/bsu_N_sf"/>
</dbReference>
<dbReference type="InterPro" id="IPR000194">
    <property type="entry name" value="ATPase_F1/V1/A1_a/bsu_nucl-bd"/>
</dbReference>
<dbReference type="InterPro" id="IPR024034">
    <property type="entry name" value="ATPase_F1/V1_b/a_C"/>
</dbReference>
<dbReference type="InterPro" id="IPR027417">
    <property type="entry name" value="P-loop_NTPase"/>
</dbReference>
<dbReference type="NCBIfam" id="TIGR01039">
    <property type="entry name" value="atpD"/>
    <property type="match status" value="1"/>
</dbReference>
<dbReference type="PANTHER" id="PTHR15184">
    <property type="entry name" value="ATP SYNTHASE"/>
    <property type="match status" value="1"/>
</dbReference>
<dbReference type="PANTHER" id="PTHR15184:SF71">
    <property type="entry name" value="ATP SYNTHASE SUBUNIT BETA, MITOCHONDRIAL"/>
    <property type="match status" value="1"/>
</dbReference>
<dbReference type="Pfam" id="PF00006">
    <property type="entry name" value="ATP-synt_ab"/>
    <property type="match status" value="1"/>
</dbReference>
<dbReference type="Pfam" id="PF02874">
    <property type="entry name" value="ATP-synt_ab_N"/>
    <property type="match status" value="1"/>
</dbReference>
<dbReference type="Pfam" id="PF22919">
    <property type="entry name" value="ATP-synt_VA_C"/>
    <property type="match status" value="1"/>
</dbReference>
<dbReference type="PIRSF" id="PIRSF039072">
    <property type="entry name" value="ATPase_subunit_beta"/>
    <property type="match status" value="1"/>
</dbReference>
<dbReference type="SMART" id="SM00382">
    <property type="entry name" value="AAA"/>
    <property type="match status" value="1"/>
</dbReference>
<dbReference type="SUPFAM" id="SSF47917">
    <property type="entry name" value="C-terminal domain of alpha and beta subunits of F1 ATP synthase"/>
    <property type="match status" value="1"/>
</dbReference>
<dbReference type="SUPFAM" id="SSF50615">
    <property type="entry name" value="N-terminal domain of alpha and beta subunits of F1 ATP synthase"/>
    <property type="match status" value="1"/>
</dbReference>
<dbReference type="SUPFAM" id="SSF52540">
    <property type="entry name" value="P-loop containing nucleoside triphosphate hydrolases"/>
    <property type="match status" value="1"/>
</dbReference>
<dbReference type="PROSITE" id="PS00152">
    <property type="entry name" value="ATPASE_ALPHA_BETA"/>
    <property type="match status" value="1"/>
</dbReference>
<protein>
    <recommendedName>
        <fullName evidence="8">ATP synthase subunit beta, mitochondrial</fullName>
        <ecNumber evidence="4 5">7.1.2.2</ecNumber>
    </recommendedName>
</protein>
<name>ATPB_PICAN</name>
<keyword id="KW-0002">3D-structure</keyword>
<keyword id="KW-0066">ATP synthesis</keyword>
<keyword id="KW-0067">ATP-binding</keyword>
<keyword id="KW-0139">CF(1)</keyword>
<keyword id="KW-0903">Direct protein sequencing</keyword>
<keyword id="KW-0375">Hydrogen ion transport</keyword>
<keyword id="KW-0406">Ion transport</keyword>
<keyword id="KW-0472">Membrane</keyword>
<keyword id="KW-0496">Mitochondrion</keyword>
<keyword id="KW-0999">Mitochondrion inner membrane</keyword>
<keyword id="KW-0547">Nucleotide-binding</keyword>
<keyword id="KW-1278">Translocase</keyword>
<keyword id="KW-0813">Transport</keyword>